<proteinExistence type="evidence at transcript level"/>
<organism>
    <name type="scientific">Pseudocercospora fijiensis (strain CIRAD86)</name>
    <name type="common">Black leaf streak disease fungus</name>
    <name type="synonym">Mycosphaerella fijiensis</name>
    <dbReference type="NCBI Taxonomy" id="383855"/>
    <lineage>
        <taxon>Eukaryota</taxon>
        <taxon>Fungi</taxon>
        <taxon>Dikarya</taxon>
        <taxon>Ascomycota</taxon>
        <taxon>Pezizomycotina</taxon>
        <taxon>Dothideomycetes</taxon>
        <taxon>Dothideomycetidae</taxon>
        <taxon>Mycosphaerellales</taxon>
        <taxon>Mycosphaerellaceae</taxon>
        <taxon>Pseudocercospora</taxon>
    </lineage>
</organism>
<gene>
    <name type="primary">PKS8-1</name>
    <name evidence="10" type="synonym">PksIII</name>
    <name type="ORF">MYCFIDRAFT_34361</name>
</gene>
<dbReference type="EC" id="2.3.1.-" evidence="12"/>
<dbReference type="EMBL" id="KB446562">
    <property type="protein sequence ID" value="EME79056.1"/>
    <property type="molecule type" value="Genomic_DNA"/>
</dbReference>
<dbReference type="RefSeq" id="XP_007929626.1">
    <property type="nucleotide sequence ID" value="XM_007931435.1"/>
</dbReference>
<dbReference type="SMR" id="M3A326"/>
<dbReference type="STRING" id="383855.M3A326"/>
<dbReference type="GeneID" id="19338987"/>
<dbReference type="KEGG" id="pfj:MYCFIDRAFT_34361"/>
<dbReference type="VEuPathDB" id="FungiDB:MYCFIDRAFT_34361"/>
<dbReference type="eggNOG" id="KOG1202">
    <property type="taxonomic scope" value="Eukaryota"/>
</dbReference>
<dbReference type="HOGENOM" id="CLU_000022_6_1_1"/>
<dbReference type="OrthoDB" id="329835at2759"/>
<dbReference type="Proteomes" id="UP000016932">
    <property type="component" value="Unassembled WGS sequence"/>
</dbReference>
<dbReference type="GO" id="GO:0004315">
    <property type="term" value="F:3-oxoacyl-[acyl-carrier-protein] synthase activity"/>
    <property type="evidence" value="ECO:0007669"/>
    <property type="project" value="InterPro"/>
</dbReference>
<dbReference type="GO" id="GO:0004312">
    <property type="term" value="F:fatty acid synthase activity"/>
    <property type="evidence" value="ECO:0007669"/>
    <property type="project" value="TreeGrafter"/>
</dbReference>
<dbReference type="GO" id="GO:0031177">
    <property type="term" value="F:phosphopantetheine binding"/>
    <property type="evidence" value="ECO:0007669"/>
    <property type="project" value="InterPro"/>
</dbReference>
<dbReference type="GO" id="GO:0006633">
    <property type="term" value="P:fatty acid biosynthetic process"/>
    <property type="evidence" value="ECO:0007669"/>
    <property type="project" value="InterPro"/>
</dbReference>
<dbReference type="GO" id="GO:0044550">
    <property type="term" value="P:secondary metabolite biosynthetic process"/>
    <property type="evidence" value="ECO:0007669"/>
    <property type="project" value="TreeGrafter"/>
</dbReference>
<dbReference type="CDD" id="cd00833">
    <property type="entry name" value="PKS"/>
    <property type="match status" value="1"/>
</dbReference>
<dbReference type="FunFam" id="3.40.366.10:FF:000017">
    <property type="entry name" value="Non-reducing polyketide synthase aptA"/>
    <property type="match status" value="1"/>
</dbReference>
<dbReference type="FunFam" id="3.40.366.10:FF:000002">
    <property type="entry name" value="Probable polyketide synthase 2"/>
    <property type="match status" value="1"/>
</dbReference>
<dbReference type="FunFam" id="3.10.129.110:FF:000001">
    <property type="entry name" value="Sterigmatocystin biosynthesis polyketide synthase"/>
    <property type="match status" value="1"/>
</dbReference>
<dbReference type="Gene3D" id="3.30.70.3290">
    <property type="match status" value="1"/>
</dbReference>
<dbReference type="Gene3D" id="3.40.47.10">
    <property type="match status" value="1"/>
</dbReference>
<dbReference type="Gene3D" id="1.10.1200.10">
    <property type="entry name" value="ACP-like"/>
    <property type="match status" value="1"/>
</dbReference>
<dbReference type="Gene3D" id="3.40.366.10">
    <property type="entry name" value="Malonyl-Coenzyme A Acyl Carrier Protein, domain 2"/>
    <property type="match status" value="2"/>
</dbReference>
<dbReference type="Gene3D" id="3.10.129.110">
    <property type="entry name" value="Polyketide synthase dehydratase"/>
    <property type="match status" value="1"/>
</dbReference>
<dbReference type="InterPro" id="IPR001227">
    <property type="entry name" value="Ac_transferase_dom_sf"/>
</dbReference>
<dbReference type="InterPro" id="IPR036736">
    <property type="entry name" value="ACP-like_sf"/>
</dbReference>
<dbReference type="InterPro" id="IPR014043">
    <property type="entry name" value="Acyl_transferase_dom"/>
</dbReference>
<dbReference type="InterPro" id="IPR016035">
    <property type="entry name" value="Acyl_Trfase/lysoPLipase"/>
</dbReference>
<dbReference type="InterPro" id="IPR018201">
    <property type="entry name" value="Ketoacyl_synth_AS"/>
</dbReference>
<dbReference type="InterPro" id="IPR014031">
    <property type="entry name" value="Ketoacyl_synth_C"/>
</dbReference>
<dbReference type="InterPro" id="IPR014030">
    <property type="entry name" value="Ketoacyl_synth_N"/>
</dbReference>
<dbReference type="InterPro" id="IPR016036">
    <property type="entry name" value="Malonyl_transacylase_ACP-bd"/>
</dbReference>
<dbReference type="InterPro" id="IPR020841">
    <property type="entry name" value="PKS_Beta-ketoAc_synthase_dom"/>
</dbReference>
<dbReference type="InterPro" id="IPR042104">
    <property type="entry name" value="PKS_dehydratase_sf"/>
</dbReference>
<dbReference type="InterPro" id="IPR049900">
    <property type="entry name" value="PKS_mFAS_DH"/>
</dbReference>
<dbReference type="InterPro" id="IPR050091">
    <property type="entry name" value="PKS_NRPS_Biosynth_Enz"/>
</dbReference>
<dbReference type="InterPro" id="IPR020806">
    <property type="entry name" value="PKS_PP-bd"/>
</dbReference>
<dbReference type="InterPro" id="IPR009081">
    <property type="entry name" value="PP-bd_ACP"/>
</dbReference>
<dbReference type="InterPro" id="IPR030918">
    <property type="entry name" value="PT_fungal_PKS"/>
</dbReference>
<dbReference type="InterPro" id="IPR032088">
    <property type="entry name" value="SAT"/>
</dbReference>
<dbReference type="InterPro" id="IPR016039">
    <property type="entry name" value="Thiolase-like"/>
</dbReference>
<dbReference type="NCBIfam" id="TIGR04532">
    <property type="entry name" value="PT_fungal_PKS"/>
    <property type="match status" value="1"/>
</dbReference>
<dbReference type="PANTHER" id="PTHR43775">
    <property type="entry name" value="FATTY ACID SYNTHASE"/>
    <property type="match status" value="1"/>
</dbReference>
<dbReference type="PANTHER" id="PTHR43775:SF37">
    <property type="entry name" value="SI:DKEY-61P9.11"/>
    <property type="match status" value="1"/>
</dbReference>
<dbReference type="Pfam" id="PF00698">
    <property type="entry name" value="Acyl_transf_1"/>
    <property type="match status" value="1"/>
</dbReference>
<dbReference type="Pfam" id="PF22621">
    <property type="entry name" value="CurL-like_PKS_C"/>
    <property type="match status" value="1"/>
</dbReference>
<dbReference type="Pfam" id="PF00109">
    <property type="entry name" value="ketoacyl-synt"/>
    <property type="match status" value="1"/>
</dbReference>
<dbReference type="Pfam" id="PF02801">
    <property type="entry name" value="Ketoacyl-synt_C"/>
    <property type="match status" value="1"/>
</dbReference>
<dbReference type="Pfam" id="PF00550">
    <property type="entry name" value="PP-binding"/>
    <property type="match status" value="1"/>
</dbReference>
<dbReference type="Pfam" id="PF16073">
    <property type="entry name" value="SAT"/>
    <property type="match status" value="1"/>
</dbReference>
<dbReference type="SMART" id="SM00827">
    <property type="entry name" value="PKS_AT"/>
    <property type="match status" value="1"/>
</dbReference>
<dbReference type="SMART" id="SM00825">
    <property type="entry name" value="PKS_KS"/>
    <property type="match status" value="1"/>
</dbReference>
<dbReference type="SMART" id="SM00823">
    <property type="entry name" value="PKS_PP"/>
    <property type="match status" value="1"/>
</dbReference>
<dbReference type="SUPFAM" id="SSF47336">
    <property type="entry name" value="ACP-like"/>
    <property type="match status" value="1"/>
</dbReference>
<dbReference type="SUPFAM" id="SSF52151">
    <property type="entry name" value="FabD/lysophospholipase-like"/>
    <property type="match status" value="1"/>
</dbReference>
<dbReference type="SUPFAM" id="SSF55048">
    <property type="entry name" value="Probable ACP-binding domain of malonyl-CoA ACP transacylase"/>
    <property type="match status" value="1"/>
</dbReference>
<dbReference type="SUPFAM" id="SSF53901">
    <property type="entry name" value="Thiolase-like"/>
    <property type="match status" value="1"/>
</dbReference>
<dbReference type="PROSITE" id="PS50075">
    <property type="entry name" value="CARRIER"/>
    <property type="match status" value="1"/>
</dbReference>
<dbReference type="PROSITE" id="PS00606">
    <property type="entry name" value="KS3_1"/>
    <property type="match status" value="1"/>
</dbReference>
<dbReference type="PROSITE" id="PS52004">
    <property type="entry name" value="KS3_2"/>
    <property type="match status" value="1"/>
</dbReference>
<dbReference type="PROSITE" id="PS52019">
    <property type="entry name" value="PKS_MFAS_DH"/>
    <property type="match status" value="1"/>
</dbReference>
<name>PKS81_PSEFD</name>
<feature type="chain" id="PRO_0000451117" description="Non-reducing polyketide synthase PKS8-1">
    <location>
        <begin position="1"/>
        <end position="1762"/>
    </location>
</feature>
<feature type="domain" description="Ketosynthase family 3 (KS3)" evidence="3 12">
    <location>
        <begin position="385"/>
        <end position="819"/>
    </location>
</feature>
<feature type="domain" description="PKS/mFAS DH" evidence="4">
    <location>
        <begin position="1312"/>
        <end position="1618"/>
    </location>
</feature>
<feature type="domain" description="Carrier" evidence="2 12">
    <location>
        <begin position="1685"/>
        <end position="1762"/>
    </location>
</feature>
<feature type="region of interest" description="N-terminal acylcarrier protein transacylase domain (SAT)" evidence="1 12">
    <location>
        <begin position="17"/>
        <end position="247"/>
    </location>
</feature>
<feature type="region of interest" description="Malonyl-CoA:ACP transacylase (MAT) domain" evidence="1 12">
    <location>
        <begin position="920"/>
        <end position="1240"/>
    </location>
</feature>
<feature type="region of interest" description="Product template (PT) domain" evidence="1 12">
    <location>
        <begin position="1308"/>
        <end position="1622"/>
    </location>
</feature>
<feature type="region of interest" description="N-terminal hotdog fold" evidence="4">
    <location>
        <begin position="1312"/>
        <end position="1448"/>
    </location>
</feature>
<feature type="region of interest" description="C-terminal hotdog fold" evidence="4">
    <location>
        <begin position="1471"/>
        <end position="1618"/>
    </location>
</feature>
<feature type="region of interest" description="Disordered" evidence="5">
    <location>
        <begin position="1632"/>
        <end position="1689"/>
    </location>
</feature>
<feature type="compositionally biased region" description="Pro residues" evidence="5">
    <location>
        <begin position="1671"/>
        <end position="1680"/>
    </location>
</feature>
<feature type="active site" description="For beta-ketoacyl synthase activity" evidence="3">
    <location>
        <position position="558"/>
    </location>
</feature>
<feature type="active site" description="For beta-ketoacyl synthase activity" evidence="3">
    <location>
        <position position="694"/>
    </location>
</feature>
<feature type="active site" description="For beta-ketoacyl synthase activity" evidence="3">
    <location>
        <position position="737"/>
    </location>
</feature>
<feature type="active site" description="Proton acceptor; for dehydratase activity" evidence="4">
    <location>
        <position position="1344"/>
    </location>
</feature>
<feature type="active site" description="Proton donor; for dehydratase activity" evidence="4">
    <location>
        <position position="1529"/>
    </location>
</feature>
<feature type="modified residue" description="O-(pantetheine 4'-phosphoryl)serine" evidence="2">
    <location>
        <position position="1722"/>
    </location>
</feature>
<keyword id="KW-0511">Multifunctional enzyme</keyword>
<keyword id="KW-0596">Phosphopantetheine</keyword>
<keyword id="KW-0597">Phosphoprotein</keyword>
<keyword id="KW-1185">Reference proteome</keyword>
<keyword id="KW-0808">Transferase</keyword>
<evidence type="ECO:0000255" key="1"/>
<evidence type="ECO:0000255" key="2">
    <source>
        <dbReference type="PROSITE-ProRule" id="PRU00258"/>
    </source>
</evidence>
<evidence type="ECO:0000255" key="3">
    <source>
        <dbReference type="PROSITE-ProRule" id="PRU01348"/>
    </source>
</evidence>
<evidence type="ECO:0000255" key="4">
    <source>
        <dbReference type="PROSITE-ProRule" id="PRU01363"/>
    </source>
</evidence>
<evidence type="ECO:0000256" key="5">
    <source>
        <dbReference type="SAM" id="MobiDB-lite"/>
    </source>
</evidence>
<evidence type="ECO:0000269" key="6">
    <source>
    </source>
</evidence>
<evidence type="ECO:0000269" key="7">
    <source>
    </source>
</evidence>
<evidence type="ECO:0000269" key="8">
    <source>
    </source>
</evidence>
<evidence type="ECO:0000303" key="9">
    <source>
    </source>
</evidence>
<evidence type="ECO:0000303" key="10">
    <source>
    </source>
</evidence>
<evidence type="ECO:0000303" key="11">
    <source>
    </source>
</evidence>
<evidence type="ECO:0000305" key="12">
    <source>
    </source>
</evidence>
<evidence type="ECO:0000305" key="13">
    <source>
    </source>
</evidence>
<reference key="1">
    <citation type="journal article" date="2012" name="PLoS Pathog.">
        <title>Diverse lifestyles and strategies of plant pathogenesis encoded in the genomes of eighteen Dothideomycetes fungi.</title>
        <authorList>
            <person name="Ohm R.A."/>
            <person name="Feau N."/>
            <person name="Henrissat B."/>
            <person name="Schoch C.L."/>
            <person name="Horwitz B.A."/>
            <person name="Barry K.W."/>
            <person name="Condon B.J."/>
            <person name="Copeland A.C."/>
            <person name="Dhillon B."/>
            <person name="Glaser F."/>
            <person name="Hesse C.N."/>
            <person name="Kosti I."/>
            <person name="LaButti K."/>
            <person name="Lindquist E.A."/>
            <person name="Lucas S."/>
            <person name="Salamov A.A."/>
            <person name="Bradshaw R.E."/>
            <person name="Ciuffetti L."/>
            <person name="Hamelin R.C."/>
            <person name="Kema G.H.J."/>
            <person name="Lawrence C."/>
            <person name="Scott J.A."/>
            <person name="Spatafora J.W."/>
            <person name="Turgeon B.G."/>
            <person name="de Wit P.J.G.M."/>
            <person name="Zhong S."/>
            <person name="Goodwin S.B."/>
            <person name="Grigoriev I.V."/>
        </authorList>
    </citation>
    <scope>NUCLEOTIDE SEQUENCE [LARGE SCALE GENOMIC DNA]</scope>
    <source>
        <strain>CIRAD86</strain>
    </source>
</reference>
<reference key="2">
    <citation type="journal article" date="2016" name="PLoS Genet.">
        <title>Comparative genomics of the Sigatoka disease complex on banana suggests a link between parallel evolutionary changes in Pseudocercospora fijiensis and Pseudocercospora eumusae and increased virulence on the banana host.</title>
        <authorList>
            <person name="Chang T.C."/>
            <person name="Salvucci A."/>
            <person name="Crous P.W."/>
            <person name="Stergiopoulos I."/>
        </authorList>
    </citation>
    <scope>IDENTIFICATION</scope>
</reference>
<reference key="3">
    <citation type="journal article" date="2016" name="PLoS ONE">
        <title>Bioinformatics prediction of polyketide synthase gene clusters from Mycosphaerella fijiensis.</title>
        <authorList>
            <person name="Noar R.D."/>
            <person name="Daub M.E."/>
        </authorList>
    </citation>
    <scope>IDENTIFICATION</scope>
    <scope>FUNCTION</scope>
    <scope>DOMAIN</scope>
</reference>
<reference key="4">
    <citation type="journal article" date="2019" name="PLoS ONE">
        <title>A novel polyketide synthase gene cluster in the plant pathogenic fungus Pseudocercospora fijiensis.</title>
        <authorList>
            <person name="Noar R.D."/>
            <person name="Thomas E."/>
            <person name="Daub M.E."/>
        </authorList>
    </citation>
    <scope>FUNCTION</scope>
    <scope>INDUCTION</scope>
    <scope>PATHWAY</scope>
</reference>
<sequence length="1762" mass="192445">MEFVYFSNEFPKDDLHDIYRGLHNHSKHRDFPLLARFLNEATAAVKDEVRRLPTELKRLIPPFDNLLSWVENKELREGLLCGAIDGVLLIVAQVASYIGYVESHPEELRNMSEASLAGLGIGLLASTAISLSTEQADLPLAGADAVRLAFRMGVHVFGVSENLEARDLSEKPETWACVVHNVDPAVAQKELDAMQPAGEVPETGKVFISAISRTSVTVSAPPQKLKALLNKCEFFRKARYIELPVYGGLCHAPHIYSAQDTESIVRGASLNARRKGLEPVVPVYSTSSGQPYAAKTATELFECVVSELLRQAICWDKVIAGIVDSAKRTATTEATLHCFGNSIPLNDLDKAFKSDMPELRVSTNNLVPWIFQNEPRDTAPRGPAQSKLAITGISCRFPGGATTTEKFWEILEKGLDVSRKIPADRFDIETHYDPTGKALNKSMTQYMCPIDEPGLFDAPFFNMSPREAQVVDPQMRLALVTAYEALERAGYVGNRTASTKLERIGTYYGQAADDYREVNQGQEVSTYYIPGGCRAFGPGRINYFFKFAGPSYSIDTACSSGLAAIEIACRALWNGDVDTAVTGGMNILTNPDGFAGLNQGHFLSKGHNACKTWDATADGYCRADGIGSLVIKRLEDAEADNDNILGVILGAGTNHSAEAVSITHPHAGHQAYLSRQVLRQAGVDPLDVSYVELHGTGTQAGDFEEMSGIMDVYAPLTKRRSKDQPLHIGAVKSNVGHGESVAGTTALIKVLMMLQKNAIPKHIGIKTEINPKFPKDFKQRNLHIAFEQTAWPQIPGKKRLAAINNFGAAGGNTTMVLEEGPVREKQQADPRQSHVVAVSAKTKASLTGNIERLIAYLEANPATDLADLAYTSTARRYQHTHRVAMATSDVAELTKKLTSSLSKVDSIGPVGKSGPPQVAFSFTGQGASHKSMNLELYRDVPTFREHIHHLDTIAQNQGFPSCIPALDGSFPQDHEHSPVITQLALVCTEMALAKYWASLGVKPDVVIGHSLGEYAAMHVAGVITASDAIFMVGRRAQMLQEKCKIRSHTMMAVRASVAQISESSGGKRHTIACVNGPSDTVLSGTKEQMNEIQVPLEAAGYRCIKLDVAFAFHSEQTDPILDDLEAVLESGVVFQEPKMPYISPLLGKTIFDGKTLNANYVRRATREAVNFLPAMQNAIDIEAVSEETVWVEIGPHPVCAGFIKSIVPSTQLAIPSIRRNEDNWTTMSSSMAALHLTGVALSWNEFHRPFESSLRLLDLPTYAFTEKNYWLQYNGDWCLTKGNTFYSAEKEAARAAEPQPSVGSDLQTSTVQQVIALEVEGNAGVVVMKSDLMQGDLLVAAHGHRMNGCGVVTSSIHADIAYTLGNYLYRKIKPKDKVPAMNMTDLLVTKGLVAQNKTKYPQEFRVTAATPDITSGQIMMSWQNVDDNEPFATATLILGDANDWLSSWESMSHLICSRIDSLERMAAEGKASRFTRNMAYTLFASNLVDYADKYRGMQSVVMSGLEAFADVELTTKESGTWTIAPYFIDSVAHLAGFVMNCSDAMDAAKNYCVTPGWKSMRFAKPLTAGAKYRSYVRMIPTKDDPTVYLGDVYIMQDDEIMGMVGGIQFRSYPRILLNRFFSAPDKAMTEARAGNAATVTPQVTIPKPPSSLKTPAPANPSRRDSGVESKPLPPPQPKQAPPSTDSENSTISKALTLIATEGGLEISDLGDDVSFADLGIDSLLSLVISEKFRSELGVQVSGSLVLDYPRIGDMRRWLEEHY</sequence>
<comment type="function">
    <text evidence="6 7 8 13">Non-reducing polyketide synthase; part of the gene cluster that mediates the biosynthesis of an emodin derivative that may be involved in black Sigatoka disease of banana (PubMed:27388157, PubMed:27513322, PubMed:30735556). The pathway begins with the synthesis of atrochrysone thioester by the polyketide synthase PKS8-1 (Probable). The atrochrysone carboxyl ACP thioesterase MYCFIDRAFT_190111 then breaks the thioester bond and releases the atrochrysone carboxylic acid from PKS8-1 (Probable). The decarboxylase MYCFIDRAFT_34057 then catalyzes the concerted decarboxylation-elimination required to convert atochrysone carboxylic acid into emodin anthrone, which is further oxidized to emodin by the anthrone oxygenase MYCFIDRAFT_34418 (Probable). The functions of the other tailoring enzymes as well as the final product of the cluster have still to be identified (Probable).</text>
</comment>
<comment type="catalytic activity">
    <reaction evidence="13">
        <text>holo-[ACP] + 8 malonyl-CoA + 8 H(+) = atrochrysone carboxyl-[ACP] + 8 CO2 + 8 CoA + 2 H2O</text>
        <dbReference type="Rhea" id="RHEA:64232"/>
        <dbReference type="Rhea" id="RHEA-COMP:9685"/>
        <dbReference type="Rhea" id="RHEA-COMP:16552"/>
        <dbReference type="ChEBI" id="CHEBI:15377"/>
        <dbReference type="ChEBI" id="CHEBI:15378"/>
        <dbReference type="ChEBI" id="CHEBI:16526"/>
        <dbReference type="ChEBI" id="CHEBI:57287"/>
        <dbReference type="ChEBI" id="CHEBI:57384"/>
        <dbReference type="ChEBI" id="CHEBI:64479"/>
        <dbReference type="ChEBI" id="CHEBI:149712"/>
    </reaction>
    <physiologicalReaction direction="left-to-right" evidence="13">
        <dbReference type="Rhea" id="RHEA:64233"/>
    </physiologicalReaction>
</comment>
<comment type="pathway">
    <text evidence="13">Secondary metabolite biosynthesis.</text>
</comment>
<comment type="induction">
    <text evidence="8">Expression is positively regulated by the cluster-specific transcription factor MYCFIDRAFT_198930 and is up-regulated as early as 2 weeks post-inoculation and remains high through 9 weeks.</text>
</comment>
<comment type="domain">
    <text evidence="12">Multidomain protein; including a starter unit:ACP transacylase (SAT) that selects the starter unit; a ketosynthase (KS) that catalyzes repeated decarboxylative condensation to elongate the polyketide backbone; a malonyl-CoA:ACP transacylase (MAT) that selects and transfers the extender unit malonyl-CoA; a product template (PT) domain that controls the immediate cyclization regioselectivity of the reactive polyketide backbone; and an acyl-carrier protein (ACP) that serves as the tether of the growing and completed polyketide via its phosphopantetheinyl arm.</text>
</comment>
<accession>M3A326</accession>
<protein>
    <recommendedName>
        <fullName evidence="9">Non-reducing polyketide synthase PKS8-1</fullName>
        <ecNumber evidence="12">2.3.1.-</ecNumber>
    </recommendedName>
    <alternativeName>
        <fullName evidence="11">PKS8-1 gene cluster protein PKS8-1</fullName>
    </alternativeName>
</protein>